<accession>B6H059</accession>
<gene>
    <name evidence="4" type="primary">prx5</name>
    <name type="ORF">Pc12g06260</name>
    <name type="ORF">PCH_Pc12g06260</name>
</gene>
<organism>
    <name type="scientific">Penicillium rubens (strain ATCC 28089 / DSM 1075 / NRRL 1951 / Wisconsin 54-1255)</name>
    <name type="common">Penicillium chrysogenum</name>
    <dbReference type="NCBI Taxonomy" id="500485"/>
    <lineage>
        <taxon>Eukaryota</taxon>
        <taxon>Fungi</taxon>
        <taxon>Dikarya</taxon>
        <taxon>Ascomycota</taxon>
        <taxon>Pezizomycotina</taxon>
        <taxon>Eurotiomycetes</taxon>
        <taxon>Eurotiomycetidae</taxon>
        <taxon>Eurotiales</taxon>
        <taxon>Aspergillaceae</taxon>
        <taxon>Penicillium</taxon>
        <taxon>Penicillium chrysogenum species complex</taxon>
    </lineage>
</organism>
<feature type="chain" id="PRO_0000451234" description="MFS-type transporter prx5">
    <location>
        <begin position="1"/>
        <end position="544"/>
    </location>
</feature>
<feature type="transmembrane region" description="Helical" evidence="1">
    <location>
        <begin position="36"/>
        <end position="56"/>
    </location>
</feature>
<feature type="transmembrane region" description="Helical" evidence="1">
    <location>
        <begin position="90"/>
        <end position="110"/>
    </location>
</feature>
<feature type="transmembrane region" description="Helical" evidence="1">
    <location>
        <begin position="116"/>
        <end position="136"/>
    </location>
</feature>
<feature type="transmembrane region" description="Helical" evidence="1">
    <location>
        <begin position="148"/>
        <end position="168"/>
    </location>
</feature>
<feature type="transmembrane region" description="Helical" evidence="1">
    <location>
        <begin position="178"/>
        <end position="198"/>
    </location>
</feature>
<feature type="transmembrane region" description="Helical" evidence="1">
    <location>
        <begin position="221"/>
        <end position="241"/>
    </location>
</feature>
<feature type="transmembrane region" description="Helical" evidence="1">
    <location>
        <begin position="249"/>
        <end position="269"/>
    </location>
</feature>
<feature type="transmembrane region" description="Helical" evidence="1">
    <location>
        <begin position="290"/>
        <end position="310"/>
    </location>
</feature>
<feature type="transmembrane region" description="Helical" evidence="1">
    <location>
        <begin position="330"/>
        <end position="350"/>
    </location>
</feature>
<feature type="transmembrane region" description="Helical" evidence="1">
    <location>
        <begin position="361"/>
        <end position="381"/>
    </location>
</feature>
<feature type="transmembrane region" description="Helical" evidence="1">
    <location>
        <begin position="387"/>
        <end position="407"/>
    </location>
</feature>
<feature type="transmembrane region" description="Helical" evidence="1">
    <location>
        <begin position="418"/>
        <end position="438"/>
    </location>
</feature>
<feature type="transmembrane region" description="Helical" evidence="1">
    <location>
        <begin position="505"/>
        <end position="525"/>
    </location>
</feature>
<feature type="region of interest" description="Disordered" evidence="2">
    <location>
        <begin position="1"/>
        <end position="28"/>
    </location>
</feature>
<dbReference type="EMBL" id="AM920427">
    <property type="protein sequence ID" value="CAP80253.1"/>
    <property type="molecule type" value="Genomic_DNA"/>
</dbReference>
<dbReference type="RefSeq" id="XP_002557469.1">
    <property type="nucleotide sequence ID" value="XM_002557423.1"/>
</dbReference>
<dbReference type="SMR" id="B6H059"/>
<dbReference type="VEuPathDB" id="FungiDB:PCH_Pc12g06260"/>
<dbReference type="eggNOG" id="KOG0254">
    <property type="taxonomic scope" value="Eukaryota"/>
</dbReference>
<dbReference type="HOGENOM" id="CLU_000960_25_2_1"/>
<dbReference type="OMA" id="WPIPVVS"/>
<dbReference type="OrthoDB" id="4139357at2759"/>
<dbReference type="BioCyc" id="PCHR:PC12G06260-MONOMER"/>
<dbReference type="Proteomes" id="UP000000724">
    <property type="component" value="Contig Pc00c12"/>
</dbReference>
<dbReference type="GO" id="GO:0005886">
    <property type="term" value="C:plasma membrane"/>
    <property type="evidence" value="ECO:0007669"/>
    <property type="project" value="UniProtKB-SubCell"/>
</dbReference>
<dbReference type="GO" id="GO:0022857">
    <property type="term" value="F:transmembrane transporter activity"/>
    <property type="evidence" value="ECO:0007669"/>
    <property type="project" value="InterPro"/>
</dbReference>
<dbReference type="Gene3D" id="1.20.1250.20">
    <property type="entry name" value="MFS general substrate transporter like domains"/>
    <property type="match status" value="1"/>
</dbReference>
<dbReference type="InterPro" id="IPR010573">
    <property type="entry name" value="MFS_Str1/Tri12-like"/>
</dbReference>
<dbReference type="InterPro" id="IPR036259">
    <property type="entry name" value="MFS_trans_sf"/>
</dbReference>
<dbReference type="PANTHER" id="PTHR23501">
    <property type="entry name" value="MAJOR FACILITATOR SUPERFAMILY"/>
    <property type="match status" value="1"/>
</dbReference>
<dbReference type="PANTHER" id="PTHR23501:SF195">
    <property type="entry name" value="PEP5"/>
    <property type="match status" value="1"/>
</dbReference>
<dbReference type="Pfam" id="PF06609">
    <property type="entry name" value="TRI12"/>
    <property type="match status" value="1"/>
</dbReference>
<dbReference type="SUPFAM" id="SSF103473">
    <property type="entry name" value="MFS general substrate transporter"/>
    <property type="match status" value="1"/>
</dbReference>
<proteinExistence type="evidence at transcript level"/>
<name>PRX5_PENRW</name>
<protein>
    <recommendedName>
        <fullName evidence="4">MFS-type transporter prx5</fullName>
    </recommendedName>
    <alternativeName>
        <fullName evidence="4">PR-toxin biosynthesis cluster protein 5</fullName>
    </alternativeName>
</protein>
<reference key="1">
    <citation type="journal article" date="2008" name="Nat. Biotechnol.">
        <title>Genome sequencing and analysis of the filamentous fungus Penicillium chrysogenum.</title>
        <authorList>
            <person name="van den Berg M.A."/>
            <person name="Albang R."/>
            <person name="Albermann K."/>
            <person name="Badger J.H."/>
            <person name="Daran J.-M."/>
            <person name="Driessen A.J.M."/>
            <person name="Garcia-Estrada C."/>
            <person name="Fedorova N.D."/>
            <person name="Harris D.M."/>
            <person name="Heijne W.H.M."/>
            <person name="Joardar V.S."/>
            <person name="Kiel J.A.K.W."/>
            <person name="Kovalchuk A."/>
            <person name="Martin J.F."/>
            <person name="Nierman W.C."/>
            <person name="Nijland J.G."/>
            <person name="Pronk J.T."/>
            <person name="Roubos J.A."/>
            <person name="van der Klei I.J."/>
            <person name="van Peij N.N.M.E."/>
            <person name="Veenhuis M."/>
            <person name="von Doehren H."/>
            <person name="Wagner C."/>
            <person name="Wortman J.R."/>
            <person name="Bovenberg R.A.L."/>
        </authorList>
    </citation>
    <scope>NUCLEOTIDE SEQUENCE [LARGE SCALE GENOMIC DNA]</scope>
    <source>
        <strain>ATCC 28089 / DSM 1075 / NRRL 1951 / Wisconsin 54-1255</strain>
    </source>
</reference>
<reference key="2">
    <citation type="journal article" date="2014" name="Fungal Genet. Biol.">
        <title>Molecular characterization of the PR-toxin gene cluster in Penicillium roqueforti and Penicillium chrysogenum: cross talk of secondary metabolite pathways.</title>
        <authorList>
            <person name="Hidalgo P.I."/>
            <person name="Ullan R.V."/>
            <person name="Albillos S.M."/>
            <person name="Montero O."/>
            <person name="Fernandez-Bodega M.A."/>
            <person name="Garcia-Estrada C."/>
            <person name="Fernandez-Aguado M."/>
            <person name="Martin J.F."/>
        </authorList>
    </citation>
    <scope>FUNCTION</scope>
    <scope>INDUCTION</scope>
    <scope>PATHWAY</scope>
</reference>
<keyword id="KW-1003">Cell membrane</keyword>
<keyword id="KW-0472">Membrane</keyword>
<keyword id="KW-1185">Reference proteome</keyword>
<keyword id="KW-0812">Transmembrane</keyword>
<keyword id="KW-1133">Transmembrane helix</keyword>
<keyword id="KW-0813">Transport</keyword>
<comment type="function">
    <text evidence="3">MFS-type transporter; part of the gene cluster that mediates the biosynthesis of PR-toxin, a bicyclic sesquiterpene belonging to the eremophilane class and acting as a mycotoxin.</text>
</comment>
<comment type="subcellular location">
    <subcellularLocation>
        <location evidence="5">Cell membrane</location>
        <topology evidence="1">Multi-pass membrane protein</topology>
    </subcellularLocation>
</comment>
<comment type="induction">
    <text evidence="3">Expression and the subsequent production of PR-toxin take place under static culture conditions (oxygen limited), whereas no expression of the PR-toxin genes occurs under the strongly aerated conditions required for optimal penicillin production (PubMed:24239699). There is a negative control of the transcription of the PR-toxin genes by the penicillin biosynthesis gene product(s), or by a regulatory peptide encoded by a small ORF inside the penicillin gene cluster (PubMed:24239699).</text>
</comment>
<comment type="similarity">
    <text evidence="5">Belongs to the major facilitator superfamily.</text>
</comment>
<sequence length="544" mass="58379">MAVDTEKDSVQAGSPMETPGSPVDETTEPVVTSKTWIVSMILSCGYGLSFWPIPVVSAIGTMISADMGDPTGYIWTLCKETNPIIGMDYLDHLCFLDLVCFIGHIVVASAKSTNQVIAGLVVSGFGGANCQMAAFALPELLPNKWRHIGVVIADLTVYIAVIIAPVTARYGYELGTWAWNFWGVAIFQGLSFFGLLFLYHPPKHPLGIPYKEAFKSLDYLGAFLFIGGAVPFLMGIVWAGVYDSNDVHVVAPLVVGAAVLVCFALWESFGKLKYPLTPTYVFASSWGRDFTAPVIALGVVNMFYYSSSILWPQMITVFYTNGGADWKYSVILSLPQGFAIFFGAMLLTCFGSKLRHWHWQLTGSVFVMVVFGSLLGIVTPTNKGTMIAFIFLSQAGFGWALYLSIAITQMGVEHKNLGVSGGISGCIRFAAGAVATSIYQTVYSNSLAKYTAIYVPSAAISAGLPESKVTDLMAVVSQGAAAMKSYSPAVVAAAEAALSQAYCKAIFVVAMVSMAFGILGLAACLCCKDVDSKMTNKPTIIRRD</sequence>
<evidence type="ECO:0000255" key="1"/>
<evidence type="ECO:0000256" key="2">
    <source>
        <dbReference type="SAM" id="MobiDB-lite"/>
    </source>
</evidence>
<evidence type="ECO:0000269" key="3">
    <source>
    </source>
</evidence>
<evidence type="ECO:0000303" key="4">
    <source>
    </source>
</evidence>
<evidence type="ECO:0000305" key="5"/>